<reference key="1">
    <citation type="journal article" date="1996" name="Proc. Natl. Acad. Sci. U.S.A.">
        <title>E2-C, a cyclin-selective ubiquitin carrier protein required for the destruction of mitotic cyclins.</title>
        <authorList>
            <person name="Aristarkhov A."/>
            <person name="Eytan E."/>
            <person name="Moghe A."/>
            <person name="Admon A."/>
            <person name="Hershko A."/>
            <person name="Ruderman J.V."/>
        </authorList>
    </citation>
    <scope>NUCLEOTIDE SEQUENCE [MRNA]</scope>
    <scope>PARTIAL PROTEIN SEQUENCE</scope>
</reference>
<reference key="2">
    <citation type="journal article" date="1997" name="Proc. Natl. Acad. Sci. U.S.A.">
        <title>Dominant-negative cyclin-selective ubiquitin carrier protein E2-C/UbcH10 blocks cells in metaphase.</title>
        <authorList>
            <person name="Townsley F.M."/>
            <person name="Aristarkhov A."/>
            <person name="Beck S."/>
            <person name="Hershko A."/>
            <person name="Ruderman J.V."/>
        </authorList>
    </citation>
    <scope>MUTAGENESIS OF CYS-114</scope>
</reference>
<reference key="3">
    <citation type="journal article" date="1999" name="Biochemistry">
        <title>Crystal structure of the cyclin-specific ubiquitin-conjugating enzyme from clam, E2-C, at 2.0 A resolution.</title>
        <authorList>
            <person name="Jiang F."/>
            <person name="Basavappa R."/>
        </authorList>
    </citation>
    <scope>X-RAY CRYSTALLOGRAPHY (2.0 ANGSTROMS)</scope>
</reference>
<protein>
    <recommendedName>
        <fullName>Ubiquitin-conjugating enzyme E2 C</fullName>
        <ecNumber>2.3.2.23</ecNumber>
    </recommendedName>
    <alternativeName>
        <fullName>(E3-independent) E2 ubiquitin-conjugating enzyme C</fullName>
        <ecNumber>2.3.2.24</ecNumber>
    </alternativeName>
    <alternativeName>
        <fullName>E2 ubiquitin-conjugating enzyme C</fullName>
    </alternativeName>
    <alternativeName>
        <fullName>Ubiquitin carrier protein C</fullName>
    </alternativeName>
    <alternativeName>
        <fullName>Ubiquitin-protein ligase C</fullName>
    </alternativeName>
</protein>
<dbReference type="EC" id="2.3.2.23"/>
<dbReference type="EC" id="2.3.2.24"/>
<dbReference type="EMBL" id="U52949">
    <property type="protein sequence ID" value="AAB06237.1"/>
    <property type="molecule type" value="mRNA"/>
</dbReference>
<dbReference type="PDB" id="2E2C">
    <property type="method" value="X-ray"/>
    <property type="resolution" value="2.00 A"/>
    <property type="chains" value="A=22-177"/>
</dbReference>
<dbReference type="PDBsum" id="2E2C"/>
<dbReference type="SMR" id="Q95044"/>
<dbReference type="UniPathway" id="UPA00143"/>
<dbReference type="EvolutionaryTrace" id="Q95044"/>
<dbReference type="GO" id="GO:0005524">
    <property type="term" value="F:ATP binding"/>
    <property type="evidence" value="ECO:0007669"/>
    <property type="project" value="UniProtKB-KW"/>
</dbReference>
<dbReference type="GO" id="GO:0061631">
    <property type="term" value="F:ubiquitin conjugating enzyme activity"/>
    <property type="evidence" value="ECO:0007669"/>
    <property type="project" value="UniProtKB-EC"/>
</dbReference>
<dbReference type="GO" id="GO:0051301">
    <property type="term" value="P:cell division"/>
    <property type="evidence" value="ECO:0007669"/>
    <property type="project" value="UniProtKB-KW"/>
</dbReference>
<dbReference type="GO" id="GO:0016567">
    <property type="term" value="P:protein ubiquitination"/>
    <property type="evidence" value="ECO:0007669"/>
    <property type="project" value="UniProtKB-UniPathway"/>
</dbReference>
<dbReference type="CDD" id="cd23791">
    <property type="entry name" value="UBCc_UBE2C"/>
    <property type="match status" value="1"/>
</dbReference>
<dbReference type="FunFam" id="3.10.110.10:FF:000039">
    <property type="entry name" value="Ubiquitin-conjugating enzyme E2 C"/>
    <property type="match status" value="1"/>
</dbReference>
<dbReference type="Gene3D" id="3.10.110.10">
    <property type="entry name" value="Ubiquitin Conjugating Enzyme"/>
    <property type="match status" value="1"/>
</dbReference>
<dbReference type="InterPro" id="IPR050113">
    <property type="entry name" value="Ub_conjugating_enzyme"/>
</dbReference>
<dbReference type="InterPro" id="IPR000608">
    <property type="entry name" value="UBQ-conjugat_E2_core"/>
</dbReference>
<dbReference type="InterPro" id="IPR023313">
    <property type="entry name" value="UBQ-conjugating_AS"/>
</dbReference>
<dbReference type="InterPro" id="IPR016135">
    <property type="entry name" value="UBQ-conjugating_enzyme/RWD"/>
</dbReference>
<dbReference type="PANTHER" id="PTHR24067">
    <property type="entry name" value="UBIQUITIN-CONJUGATING ENZYME E2"/>
    <property type="match status" value="1"/>
</dbReference>
<dbReference type="Pfam" id="PF00179">
    <property type="entry name" value="UQ_con"/>
    <property type="match status" value="1"/>
</dbReference>
<dbReference type="SMART" id="SM00212">
    <property type="entry name" value="UBCc"/>
    <property type="match status" value="1"/>
</dbReference>
<dbReference type="SUPFAM" id="SSF54495">
    <property type="entry name" value="UBC-like"/>
    <property type="match status" value="1"/>
</dbReference>
<dbReference type="PROSITE" id="PS00183">
    <property type="entry name" value="UBC_1"/>
    <property type="match status" value="1"/>
</dbReference>
<dbReference type="PROSITE" id="PS50127">
    <property type="entry name" value="UBC_2"/>
    <property type="match status" value="1"/>
</dbReference>
<comment type="function">
    <text evidence="2">Catalyzes the covalent attachment of ubiquitin to other proteins. Acts as an essential factor of the anaphase promoting complex/cyclosome (APC/C), a cell cycle-regulated ubiquitin ligase that is essential for the transition from metaphase to anaphase in mitosis. Involved in both degradation of proteins responsible for maintaining sister chromatid cohesion at the onset of anaphase and of mitotic cyclins A and B at the exit of mitosis. Acts by initiating polyubiquitin chains on APC/C substrates, leading to the degradation of APC/C substrates by the proteasome and promoting mitotic exit.</text>
</comment>
<comment type="catalytic activity">
    <reaction evidence="1 2 3">
        <text>S-ubiquitinyl-[E1 ubiquitin-activating enzyme]-L-cysteine + [E2 ubiquitin-conjugating enzyme]-L-cysteine = [E1 ubiquitin-activating enzyme]-L-cysteine + S-ubiquitinyl-[E2 ubiquitin-conjugating enzyme]-L-cysteine.</text>
        <dbReference type="EC" id="2.3.2.23"/>
    </reaction>
</comment>
<comment type="catalytic activity">
    <reaction evidence="1">
        <text>S-ubiquitinyl-[E1 ubiquitin-activating enzyme]-L-cysteine + [acceptor protein]-L-lysine = [E1 ubiquitin-activating enzyme]-L-cysteine + N(6)-monoubiquitinyl-[acceptor protein]-L-lysine.</text>
        <dbReference type="EC" id="2.3.2.24"/>
    </reaction>
</comment>
<comment type="pathway">
    <text evidence="2">Protein modification; protein ubiquitination.</text>
</comment>
<comment type="subunit">
    <text evidence="1">Component of the APC/C complex.</text>
</comment>
<comment type="PTM">
    <text evidence="1">Autoubiquitinated by the APC/C complex, leading to its degradation by the proteasome.</text>
</comment>
<comment type="similarity">
    <text evidence="2">Belongs to the ubiquitin-conjugating enzyme family.</text>
</comment>
<proteinExistence type="evidence at protein level"/>
<evidence type="ECO:0000250" key="1">
    <source>
        <dbReference type="UniProtKB" id="O00762"/>
    </source>
</evidence>
<evidence type="ECO:0000255" key="2">
    <source>
        <dbReference type="PROSITE-ProRule" id="PRU00388"/>
    </source>
</evidence>
<evidence type="ECO:0000255" key="3">
    <source>
        <dbReference type="PROSITE-ProRule" id="PRU10133"/>
    </source>
</evidence>
<evidence type="ECO:0000256" key="4">
    <source>
        <dbReference type="SAM" id="MobiDB-lite"/>
    </source>
</evidence>
<evidence type="ECO:0000269" key="5">
    <source>
    </source>
</evidence>
<evidence type="ECO:0007829" key="6">
    <source>
        <dbReference type="PDB" id="2E2C"/>
    </source>
</evidence>
<accession>Q95044</accession>
<sequence>MSGQNIDPAANQVRQKERPRDMTTSKERHSVSKRLQQELRTLLMSGDPGITAFPDGDNLFKWVATLDGPKDTVYESLKYKLTLEFPSDYPYKPPVVKFTTPCWHPNVDQSGNICLDILKENWTASYDVRTILLSLQSLLGEPNNASPLNAQAADMWSNQTEYKKVLHEKYKTAQSDK</sequence>
<keyword id="KW-0002">3D-structure</keyword>
<keyword id="KW-0067">ATP-binding</keyword>
<keyword id="KW-0131">Cell cycle</keyword>
<keyword id="KW-0132">Cell division</keyword>
<keyword id="KW-0903">Direct protein sequencing</keyword>
<keyword id="KW-0498">Mitosis</keyword>
<keyword id="KW-0547">Nucleotide-binding</keyword>
<keyword id="KW-0808">Transferase</keyword>
<keyword id="KW-0832">Ubl conjugation</keyword>
<keyword id="KW-0833">Ubl conjugation pathway</keyword>
<organism>
    <name type="scientific">Spisula solidissima</name>
    <name type="common">Atlantic surf-clam</name>
    <dbReference type="NCBI Taxonomy" id="6584"/>
    <lineage>
        <taxon>Eukaryota</taxon>
        <taxon>Metazoa</taxon>
        <taxon>Spiralia</taxon>
        <taxon>Lophotrochozoa</taxon>
        <taxon>Mollusca</taxon>
        <taxon>Bivalvia</taxon>
        <taxon>Autobranchia</taxon>
        <taxon>Heteroconchia</taxon>
        <taxon>Euheterodonta</taxon>
        <taxon>Imparidentia</taxon>
        <taxon>Neoheterodontei</taxon>
        <taxon>Venerida</taxon>
        <taxon>Mactroidea</taxon>
        <taxon>Mactridae</taxon>
        <taxon>Spisula</taxon>
    </lineage>
</organism>
<gene>
    <name type="primary">UBE2C</name>
    <name type="synonym">UBCH10</name>
</gene>
<name>UBE2C_SPISO</name>
<feature type="chain" id="PRO_0000082563" description="Ubiquitin-conjugating enzyme E2 C">
    <location>
        <begin position="1"/>
        <end position="177"/>
    </location>
</feature>
<feature type="domain" description="UBC core" evidence="2">
    <location>
        <begin position="30"/>
        <end position="175"/>
    </location>
</feature>
<feature type="region of interest" description="Disordered" evidence="4">
    <location>
        <begin position="1"/>
        <end position="31"/>
    </location>
</feature>
<feature type="compositionally biased region" description="Basic and acidic residues" evidence="4">
    <location>
        <begin position="14"/>
        <end position="30"/>
    </location>
</feature>
<feature type="active site" description="Glycyl thioester intermediate" evidence="2">
    <location>
        <position position="114"/>
    </location>
</feature>
<feature type="mutagenesis site" description="Inhibition of cyclin B degradation." evidence="5">
    <original>C</original>
    <variation>S</variation>
    <location>
        <position position="114"/>
    </location>
</feature>
<feature type="helix" evidence="6">
    <location>
        <begin position="31"/>
        <end position="45"/>
    </location>
</feature>
<feature type="strand" evidence="6">
    <location>
        <begin position="50"/>
        <end position="57"/>
    </location>
</feature>
<feature type="strand" evidence="6">
    <location>
        <begin position="59"/>
        <end position="67"/>
    </location>
</feature>
<feature type="turn" evidence="6">
    <location>
        <begin position="73"/>
        <end position="76"/>
    </location>
</feature>
<feature type="strand" evidence="6">
    <location>
        <begin position="78"/>
        <end position="84"/>
    </location>
</feature>
<feature type="turn" evidence="6">
    <location>
        <begin position="87"/>
        <end position="90"/>
    </location>
</feature>
<feature type="strand" evidence="6">
    <location>
        <begin position="95"/>
        <end position="100"/>
    </location>
</feature>
<feature type="helix" evidence="6">
    <location>
        <begin position="116"/>
        <end position="118"/>
    </location>
</feature>
<feature type="turn" evidence="6">
    <location>
        <begin position="119"/>
        <end position="121"/>
    </location>
</feature>
<feature type="helix" evidence="6">
    <location>
        <begin position="128"/>
        <end position="138"/>
    </location>
</feature>
<feature type="helix" evidence="6">
    <location>
        <begin position="150"/>
        <end position="155"/>
    </location>
</feature>
<feature type="helix" evidence="6">
    <location>
        <begin position="159"/>
        <end position="175"/>
    </location>
</feature>